<protein>
    <recommendedName>
        <fullName evidence="1">Glycine cleavage system H protein</fullName>
    </recommendedName>
</protein>
<comment type="function">
    <text evidence="1">The glycine cleavage system catalyzes the degradation of glycine. The H protein shuttles the methylamine group of glycine from the P protein to the T protein.</text>
</comment>
<comment type="cofactor">
    <cofactor evidence="1">
        <name>(R)-lipoate</name>
        <dbReference type="ChEBI" id="CHEBI:83088"/>
    </cofactor>
    <text evidence="1">Binds 1 lipoyl cofactor covalently.</text>
</comment>
<comment type="subunit">
    <text evidence="1">The glycine cleavage system is composed of four proteins: P, T, L and H.</text>
</comment>
<comment type="similarity">
    <text evidence="1">Belongs to the GcvH family.</text>
</comment>
<dbReference type="EMBL" id="AE008922">
    <property type="protein sequence ID" value="AAM42148.1"/>
    <property type="molecule type" value="Genomic_DNA"/>
</dbReference>
<dbReference type="RefSeq" id="NP_638224.1">
    <property type="nucleotide sequence ID" value="NC_003902.1"/>
</dbReference>
<dbReference type="RefSeq" id="WP_011038001.1">
    <property type="nucleotide sequence ID" value="NC_003902.1"/>
</dbReference>
<dbReference type="SMR" id="Q8P6T9"/>
<dbReference type="STRING" id="190485.XCC2876"/>
<dbReference type="EnsemblBacteria" id="AAM42148">
    <property type="protein sequence ID" value="AAM42148"/>
    <property type="gene ID" value="XCC2876"/>
</dbReference>
<dbReference type="GeneID" id="58012520"/>
<dbReference type="KEGG" id="xcc:XCC2876"/>
<dbReference type="PATRIC" id="fig|190485.4.peg.3078"/>
<dbReference type="eggNOG" id="COG0509">
    <property type="taxonomic scope" value="Bacteria"/>
</dbReference>
<dbReference type="HOGENOM" id="CLU_097408_2_0_6"/>
<dbReference type="OrthoDB" id="9796712at2"/>
<dbReference type="Proteomes" id="UP000001010">
    <property type="component" value="Chromosome"/>
</dbReference>
<dbReference type="GO" id="GO:0005829">
    <property type="term" value="C:cytosol"/>
    <property type="evidence" value="ECO:0000318"/>
    <property type="project" value="GO_Central"/>
</dbReference>
<dbReference type="GO" id="GO:0005960">
    <property type="term" value="C:glycine cleavage complex"/>
    <property type="evidence" value="ECO:0007669"/>
    <property type="project" value="InterPro"/>
</dbReference>
<dbReference type="GO" id="GO:0019464">
    <property type="term" value="P:glycine decarboxylation via glycine cleavage system"/>
    <property type="evidence" value="ECO:0007669"/>
    <property type="project" value="UniProtKB-UniRule"/>
</dbReference>
<dbReference type="CDD" id="cd06848">
    <property type="entry name" value="GCS_H"/>
    <property type="match status" value="1"/>
</dbReference>
<dbReference type="Gene3D" id="2.40.50.100">
    <property type="match status" value="1"/>
</dbReference>
<dbReference type="HAMAP" id="MF_00272">
    <property type="entry name" value="GcvH"/>
    <property type="match status" value="1"/>
</dbReference>
<dbReference type="InterPro" id="IPR003016">
    <property type="entry name" value="2-oxoA_DH_lipoyl-BS"/>
</dbReference>
<dbReference type="InterPro" id="IPR000089">
    <property type="entry name" value="Biotin_lipoyl"/>
</dbReference>
<dbReference type="InterPro" id="IPR002930">
    <property type="entry name" value="GCV_H"/>
</dbReference>
<dbReference type="InterPro" id="IPR033753">
    <property type="entry name" value="GCV_H/Fam206"/>
</dbReference>
<dbReference type="InterPro" id="IPR017453">
    <property type="entry name" value="GCV_H_sub"/>
</dbReference>
<dbReference type="InterPro" id="IPR011053">
    <property type="entry name" value="Single_hybrid_motif"/>
</dbReference>
<dbReference type="NCBIfam" id="TIGR00527">
    <property type="entry name" value="gcvH"/>
    <property type="match status" value="1"/>
</dbReference>
<dbReference type="NCBIfam" id="NF002270">
    <property type="entry name" value="PRK01202.1"/>
    <property type="match status" value="1"/>
</dbReference>
<dbReference type="PANTHER" id="PTHR11715">
    <property type="entry name" value="GLYCINE CLEAVAGE SYSTEM H PROTEIN"/>
    <property type="match status" value="1"/>
</dbReference>
<dbReference type="PANTHER" id="PTHR11715:SF3">
    <property type="entry name" value="GLYCINE CLEAVAGE SYSTEM H PROTEIN-RELATED"/>
    <property type="match status" value="1"/>
</dbReference>
<dbReference type="Pfam" id="PF01597">
    <property type="entry name" value="GCV_H"/>
    <property type="match status" value="1"/>
</dbReference>
<dbReference type="SUPFAM" id="SSF51230">
    <property type="entry name" value="Single hybrid motif"/>
    <property type="match status" value="1"/>
</dbReference>
<dbReference type="PROSITE" id="PS50968">
    <property type="entry name" value="BIOTINYL_LIPOYL"/>
    <property type="match status" value="1"/>
</dbReference>
<dbReference type="PROSITE" id="PS00189">
    <property type="entry name" value="LIPOYL"/>
    <property type="match status" value="1"/>
</dbReference>
<gene>
    <name evidence="1" type="primary">gcvH</name>
    <name type="ordered locus">XCC2876</name>
</gene>
<organism>
    <name type="scientific">Xanthomonas campestris pv. campestris (strain ATCC 33913 / DSM 3586 / NCPPB 528 / LMG 568 / P 25)</name>
    <dbReference type="NCBI Taxonomy" id="190485"/>
    <lineage>
        <taxon>Bacteria</taxon>
        <taxon>Pseudomonadati</taxon>
        <taxon>Pseudomonadota</taxon>
        <taxon>Gammaproteobacteria</taxon>
        <taxon>Lysobacterales</taxon>
        <taxon>Lysobacteraceae</taxon>
        <taxon>Xanthomonas</taxon>
    </lineage>
</organism>
<reference key="1">
    <citation type="journal article" date="2002" name="Nature">
        <title>Comparison of the genomes of two Xanthomonas pathogens with differing host specificities.</title>
        <authorList>
            <person name="da Silva A.C.R."/>
            <person name="Ferro J.A."/>
            <person name="Reinach F.C."/>
            <person name="Farah C.S."/>
            <person name="Furlan L.R."/>
            <person name="Quaggio R.B."/>
            <person name="Monteiro-Vitorello C.B."/>
            <person name="Van Sluys M.A."/>
            <person name="Almeida N.F. Jr."/>
            <person name="Alves L.M.C."/>
            <person name="do Amaral A.M."/>
            <person name="Bertolini M.C."/>
            <person name="Camargo L.E.A."/>
            <person name="Camarotte G."/>
            <person name="Cannavan F."/>
            <person name="Cardozo J."/>
            <person name="Chambergo F."/>
            <person name="Ciapina L.P."/>
            <person name="Cicarelli R.M.B."/>
            <person name="Coutinho L.L."/>
            <person name="Cursino-Santos J.R."/>
            <person name="El-Dorry H."/>
            <person name="Faria J.B."/>
            <person name="Ferreira A.J.S."/>
            <person name="Ferreira R.C.C."/>
            <person name="Ferro M.I.T."/>
            <person name="Formighieri E.F."/>
            <person name="Franco M.C."/>
            <person name="Greggio C.C."/>
            <person name="Gruber A."/>
            <person name="Katsuyama A.M."/>
            <person name="Kishi L.T."/>
            <person name="Leite R.P."/>
            <person name="Lemos E.G.M."/>
            <person name="Lemos M.V.F."/>
            <person name="Locali E.C."/>
            <person name="Machado M.A."/>
            <person name="Madeira A.M.B.N."/>
            <person name="Martinez-Rossi N.M."/>
            <person name="Martins E.C."/>
            <person name="Meidanis J."/>
            <person name="Menck C.F.M."/>
            <person name="Miyaki C.Y."/>
            <person name="Moon D.H."/>
            <person name="Moreira L.M."/>
            <person name="Novo M.T.M."/>
            <person name="Okura V.K."/>
            <person name="Oliveira M.C."/>
            <person name="Oliveira V.R."/>
            <person name="Pereira H.A."/>
            <person name="Rossi A."/>
            <person name="Sena J.A.D."/>
            <person name="Silva C."/>
            <person name="de Souza R.F."/>
            <person name="Spinola L.A.F."/>
            <person name="Takita M.A."/>
            <person name="Tamura R.E."/>
            <person name="Teixeira E.C."/>
            <person name="Tezza R.I.D."/>
            <person name="Trindade dos Santos M."/>
            <person name="Truffi D."/>
            <person name="Tsai S.M."/>
            <person name="White F.F."/>
            <person name="Setubal J.C."/>
            <person name="Kitajima J.P."/>
        </authorList>
    </citation>
    <scope>NUCLEOTIDE SEQUENCE [LARGE SCALE GENOMIC DNA]</scope>
    <source>
        <strain>ATCC 33913 / DSM 3586 / NCPPB 528 / LMG 568 / P 25</strain>
    </source>
</reference>
<name>GCSH_XANCP</name>
<accession>Q8P6T9</accession>
<feature type="chain" id="PRO_0000166268" description="Glycine cleavage system H protein">
    <location>
        <begin position="1"/>
        <end position="131"/>
    </location>
</feature>
<feature type="domain" description="Lipoyl-binding" evidence="2">
    <location>
        <begin position="24"/>
        <end position="106"/>
    </location>
</feature>
<feature type="modified residue" description="N6-lipoyllysine" evidence="1">
    <location>
        <position position="65"/>
    </location>
</feature>
<proteinExistence type="inferred from homology"/>
<keyword id="KW-0450">Lipoyl</keyword>
<keyword id="KW-1185">Reference proteome</keyword>
<sequence length="131" mass="13997">MSEIPGDLKFLKSHEWARVEGNGRVTVGISDHAQGLLGDLVYVELPAVGDTVQAGNGAAVVESVKAASDVYSPVTGTVVEVNASLSDKPETINEDAYGEGWIFVVEIDDKEQLNELLAPDDYAELLEDDAH</sequence>
<evidence type="ECO:0000255" key="1">
    <source>
        <dbReference type="HAMAP-Rule" id="MF_00272"/>
    </source>
</evidence>
<evidence type="ECO:0000255" key="2">
    <source>
        <dbReference type="PROSITE-ProRule" id="PRU01066"/>
    </source>
</evidence>